<keyword id="KW-0067">ATP-binding</keyword>
<keyword id="KW-0131">Cell cycle</keyword>
<keyword id="KW-0132">Cell division</keyword>
<keyword id="KW-0159">Chromosome partition</keyword>
<keyword id="KW-0175">Coiled coil</keyword>
<keyword id="KW-0963">Cytoplasm</keyword>
<keyword id="KW-0226">DNA condensation</keyword>
<keyword id="KW-0238">DNA-binding</keyword>
<keyword id="KW-0547">Nucleotide-binding</keyword>
<keyword id="KW-1185">Reference proteome</keyword>
<accession>A3MZU7</accession>
<gene>
    <name evidence="1" type="primary">mukB</name>
    <name type="ordered locus">APL_0581</name>
</gene>
<reference key="1">
    <citation type="journal article" date="2008" name="J. Bacteriol.">
        <title>The complete genome sequence of Actinobacillus pleuropneumoniae L20 (serotype 5b).</title>
        <authorList>
            <person name="Foote S.J."/>
            <person name="Bosse J.T."/>
            <person name="Bouevitch A.B."/>
            <person name="Langford P.R."/>
            <person name="Young N.M."/>
            <person name="Nash J.H.E."/>
        </authorList>
    </citation>
    <scope>NUCLEOTIDE SEQUENCE [LARGE SCALE GENOMIC DNA]</scope>
    <source>
        <strain>L20</strain>
    </source>
</reference>
<sequence>MTDTNELFEDQTTALQNSAPIAPLANPQHTVSRGKFRSLTLINWNGFFARTFDLDELVTTLSGGNGAGKSTTMAGFVTALIPDLTLLNFRNTTEAGSTSSSRDKGLYGKLKAGVCYAVLESLNSRGQRVITGVRLQQVAGRDKKVDIRSFSLQNVPMSDSIISILTEQVGEKARVLPLADLKDKFDGSEVLFKQYHSITDYHSFMFDLGVIPKRLRSSADRSKFYKLIEASLYGGISSVITKSLRDYLLPENTGVRQAFQDMESALRENRMTLEAIKVTQSDRDMFKRLITESTNYVSADYMRNANERRGNVQIALEQRRAWYESKSKLELEQQRLIEFSREVADISENESSLEAEYNSANDHLNLVMNALRHQEKIERYQNEVAELNEKLEEQQIALEEVSEQVETAQARADDADDQVEELRSQMADYQQALDAQQTRALQYQQAIAALEKAKQLCGLPHLDLHNVEDYHAEFAAQADDLTDQVFELEQRLSVSDMAKTQFEKAYELVCKISGEIDRSEAWNEARSLLTAFTDQKMQATQAVALRQKLADLEQRLHQQQNAERLLAEFNQKAQTQFETAEELEGYFEQQQARLEDVEAELAEFVEVRSTQRQQREQLNQQYNQLAKTAPAWHTAQSALARLEEQCGEKFEASQSVMQFMQNMLTKEREATLARDELARREAALDAQITRLSQPDGSDDVRLNQLAERFGGVLLSELYDDVSIDDAPYFSALYGEARHAIVVRDLESVKAQLEKLDDCPTDLYLIEGDPSAFDDAVFTAEELAEGVVVKVSDRQWRYSKFPEVPLFGRAAREKHLETLKAERDEVSEQHAERAFDVQKCQRLHQHLSQFVGTHLSLAFQPNPEEQMQEIAAERTEIERELNQAAGNEQQLRSQLDSAKAKLQMLNKILPLVSLLEDETLADRAEECRAQLDEAEEDEQFVRQFGNYLTQLEPIAASLKSDPAKFEQLEQDYRQAKAEQKQVQQKVFALSDVIQRRVHFSYEEAIGSEGSALTEQLRTRLENAQREREQARDQLRQAQAQFTQYNQVLTGLRSSCDAKTQMLQELIREIDDLGVRGDIGAEERARSRRDELQQRLSQQRSRKGYLDKQLGTIEAEIDNLTRTLRKAERDYHTQRELVVQAKVSWCLVLKLSRNSDVEKRLNRRELAYQSAEELRSISDKALGALRTAVADNEYLRDSLRASEDSRKPENKVAFFIAVYQHLRERIRQDIIKTDDPIDAIEQMEIELSRLTNELTSREKKLAISAESVANILRKTIQREQNRILQLNQGLQNIAFGQVKGVRLVVNIRDTHAILLNALSNGREEHKDLFDSQKLSFSEALAMLYKRVNPHIEMGQRTPQTIGEELLDYRNYLDLEVETFRGADGWMRAESSALSTGEAIGTGMSILLMVVQSWEEESRRMRAKDILPSRLLFLDEAARLDATSINTLFELCERLDMQLLIAAPENISPERGTTYKLVRKITNNQEYVHVVGLKGFGQQ</sequence>
<organism>
    <name type="scientific">Actinobacillus pleuropneumoniae serotype 5b (strain L20)</name>
    <dbReference type="NCBI Taxonomy" id="416269"/>
    <lineage>
        <taxon>Bacteria</taxon>
        <taxon>Pseudomonadati</taxon>
        <taxon>Pseudomonadota</taxon>
        <taxon>Gammaproteobacteria</taxon>
        <taxon>Pasteurellales</taxon>
        <taxon>Pasteurellaceae</taxon>
        <taxon>Actinobacillus</taxon>
    </lineage>
</organism>
<feature type="chain" id="PRO_1000069899" description="Chromosome partition protein MukB">
    <location>
        <begin position="1"/>
        <end position="1496"/>
    </location>
</feature>
<feature type="region of interest" description="Flexible hinge" evidence="1">
    <location>
        <begin position="694"/>
        <end position="811"/>
    </location>
</feature>
<feature type="region of interest" description="Disordered" evidence="2">
    <location>
        <begin position="1082"/>
        <end position="1101"/>
    </location>
</feature>
<feature type="coiled-coil region" evidence="1">
    <location>
        <begin position="328"/>
        <end position="493"/>
    </location>
</feature>
<feature type="coiled-coil region" evidence="1">
    <location>
        <begin position="536"/>
        <end position="632"/>
    </location>
</feature>
<feature type="coiled-coil region" evidence="1">
    <location>
        <begin position="808"/>
        <end position="832"/>
    </location>
</feature>
<feature type="coiled-coil region" evidence="1">
    <location>
        <begin position="861"/>
        <end position="1171"/>
    </location>
</feature>
<feature type="coiled-coil region" evidence="1">
    <location>
        <begin position="1235"/>
        <end position="1291"/>
    </location>
</feature>
<feature type="compositionally biased region" description="Basic and acidic residues" evidence="2">
    <location>
        <begin position="1082"/>
        <end position="1091"/>
    </location>
</feature>
<feature type="binding site" evidence="1">
    <location>
        <begin position="63"/>
        <end position="70"/>
    </location>
    <ligand>
        <name>ATP</name>
        <dbReference type="ChEBI" id="CHEBI:30616"/>
    </ligand>
</feature>
<evidence type="ECO:0000255" key="1">
    <source>
        <dbReference type="HAMAP-Rule" id="MF_01800"/>
    </source>
</evidence>
<evidence type="ECO:0000256" key="2">
    <source>
        <dbReference type="SAM" id="MobiDB-lite"/>
    </source>
</evidence>
<protein>
    <recommendedName>
        <fullName evidence="1">Chromosome partition protein MukB</fullName>
    </recommendedName>
    <alternativeName>
        <fullName evidence="1">Structural maintenance of chromosome-related protein</fullName>
    </alternativeName>
</protein>
<proteinExistence type="inferred from homology"/>
<name>MUKB_ACTP2</name>
<dbReference type="EMBL" id="CP000569">
    <property type="protein sequence ID" value="ABN73683.1"/>
    <property type="molecule type" value="Genomic_DNA"/>
</dbReference>
<dbReference type="RefSeq" id="WP_009874997.1">
    <property type="nucleotide sequence ID" value="NC_009053.1"/>
</dbReference>
<dbReference type="SMR" id="A3MZU7"/>
<dbReference type="STRING" id="416269.APL_0581"/>
<dbReference type="EnsemblBacteria" id="ABN73683">
    <property type="protein sequence ID" value="ABN73683"/>
    <property type="gene ID" value="APL_0581"/>
</dbReference>
<dbReference type="KEGG" id="apl:APL_0581"/>
<dbReference type="PATRIC" id="fig|416269.6.peg.612"/>
<dbReference type="eggNOG" id="COG3096">
    <property type="taxonomic scope" value="Bacteria"/>
</dbReference>
<dbReference type="HOGENOM" id="CLU_004430_0_0_6"/>
<dbReference type="Proteomes" id="UP000001432">
    <property type="component" value="Chromosome"/>
</dbReference>
<dbReference type="GO" id="GO:0005737">
    <property type="term" value="C:cytoplasm"/>
    <property type="evidence" value="ECO:0007669"/>
    <property type="project" value="UniProtKB-UniRule"/>
</dbReference>
<dbReference type="GO" id="GO:0009295">
    <property type="term" value="C:nucleoid"/>
    <property type="evidence" value="ECO:0007669"/>
    <property type="project" value="UniProtKB-SubCell"/>
</dbReference>
<dbReference type="GO" id="GO:0005524">
    <property type="term" value="F:ATP binding"/>
    <property type="evidence" value="ECO:0007669"/>
    <property type="project" value="UniProtKB-UniRule"/>
</dbReference>
<dbReference type="GO" id="GO:0003677">
    <property type="term" value="F:DNA binding"/>
    <property type="evidence" value="ECO:0007669"/>
    <property type="project" value="UniProtKB-UniRule"/>
</dbReference>
<dbReference type="GO" id="GO:0051301">
    <property type="term" value="P:cell division"/>
    <property type="evidence" value="ECO:0007669"/>
    <property type="project" value="UniProtKB-KW"/>
</dbReference>
<dbReference type="GO" id="GO:0030261">
    <property type="term" value="P:chromosome condensation"/>
    <property type="evidence" value="ECO:0007669"/>
    <property type="project" value="UniProtKB-KW"/>
</dbReference>
<dbReference type="GO" id="GO:0007059">
    <property type="term" value="P:chromosome segregation"/>
    <property type="evidence" value="ECO:0007669"/>
    <property type="project" value="UniProtKB-UniRule"/>
</dbReference>
<dbReference type="GO" id="GO:0006260">
    <property type="term" value="P:DNA replication"/>
    <property type="evidence" value="ECO:0007669"/>
    <property type="project" value="UniProtKB-UniRule"/>
</dbReference>
<dbReference type="Gene3D" id="1.20.58.850">
    <property type="match status" value="1"/>
</dbReference>
<dbReference type="Gene3D" id="3.40.1140.10">
    <property type="match status" value="2"/>
</dbReference>
<dbReference type="Gene3D" id="1.20.5.420">
    <property type="entry name" value="Immunoglobulin FC, subunit C"/>
    <property type="match status" value="1"/>
</dbReference>
<dbReference type="Gene3D" id="3.30.70.3500">
    <property type="entry name" value="MukB, hinge domain"/>
    <property type="match status" value="1"/>
</dbReference>
<dbReference type="HAMAP" id="MF_01800">
    <property type="entry name" value="MukB"/>
    <property type="match status" value="1"/>
</dbReference>
<dbReference type="InterPro" id="IPR012090">
    <property type="entry name" value="MukB"/>
</dbReference>
<dbReference type="InterPro" id="IPR050308">
    <property type="entry name" value="MukB/SMC"/>
</dbReference>
<dbReference type="InterPro" id="IPR032520">
    <property type="entry name" value="MukB_hinge"/>
</dbReference>
<dbReference type="InterPro" id="IPR042501">
    <property type="entry name" value="MukB_hinge_sf"/>
</dbReference>
<dbReference type="InterPro" id="IPR007406">
    <property type="entry name" value="MukB_N_dom"/>
</dbReference>
<dbReference type="InterPro" id="IPR027417">
    <property type="entry name" value="P-loop_NTPase"/>
</dbReference>
<dbReference type="NCBIfam" id="NF003422">
    <property type="entry name" value="PRK04863.1"/>
    <property type="match status" value="1"/>
</dbReference>
<dbReference type="PANTHER" id="PTHR42963">
    <property type="entry name" value="CHROMOSOME PARTITION PROTEIN MUKB"/>
    <property type="match status" value="1"/>
</dbReference>
<dbReference type="PANTHER" id="PTHR42963:SF1">
    <property type="entry name" value="DUF4476 DOMAIN-CONTAINING PROTEIN"/>
    <property type="match status" value="1"/>
</dbReference>
<dbReference type="Pfam" id="PF04310">
    <property type="entry name" value="MukB"/>
    <property type="match status" value="1"/>
</dbReference>
<dbReference type="Pfam" id="PF16330">
    <property type="entry name" value="MukB_hinge"/>
    <property type="match status" value="1"/>
</dbReference>
<dbReference type="Pfam" id="PF13558">
    <property type="entry name" value="SbcC_Walker_B"/>
    <property type="match status" value="1"/>
</dbReference>
<dbReference type="PIRSF" id="PIRSF005246">
    <property type="entry name" value="MukB"/>
    <property type="match status" value="1"/>
</dbReference>
<dbReference type="SUPFAM" id="SSF52540">
    <property type="entry name" value="P-loop containing nucleoside triphosphate hydrolases"/>
    <property type="match status" value="1"/>
</dbReference>
<comment type="function">
    <text evidence="1">Plays a central role in chromosome condensation, segregation and cell cycle progression. Functions as a homodimer, which is essential for chromosome partition. Involved in negative DNA supercoiling in vivo, and by this means organize and compact chromosomes. May achieve or facilitate chromosome segregation by condensation DNA from both sides of a centrally located replisome during cell division.</text>
</comment>
<comment type="subunit">
    <text evidence="1">Homodimerization via its hinge domain. Binds to DNA via its C-terminal region. Interacts, and probably forms a ternary complex, with MukE and MukF via its C-terminal region. The complex formation is stimulated by calcium or magnesium. Interacts with tubulin-related protein FtsZ.</text>
</comment>
<comment type="subcellular location">
    <subcellularLocation>
        <location evidence="1">Cytoplasm</location>
        <location evidence="1">Nucleoid</location>
    </subcellularLocation>
    <text evidence="1">Restricted to the nucleoid region.</text>
</comment>
<comment type="domain">
    <text evidence="1">The hinge domain, which separates the large intramolecular coiled coil regions, allows the homodimerization, forming a V-shaped homodimer.</text>
</comment>
<comment type="similarity">
    <text evidence="1">Belongs to the SMC family. MukB subfamily.</text>
</comment>